<keyword id="KW-0963">Cytoplasm</keyword>
<keyword id="KW-0227">DNA damage</keyword>
<keyword id="KW-0233">DNA recombination</keyword>
<keyword id="KW-0234">DNA repair</keyword>
<keyword id="KW-0238">DNA-binding</keyword>
<keyword id="KW-0255">Endonuclease</keyword>
<keyword id="KW-0378">Hydrolase</keyword>
<keyword id="KW-0460">Magnesium</keyword>
<keyword id="KW-0479">Metal-binding</keyword>
<keyword id="KW-0540">Nuclease</keyword>
<keyword id="KW-1185">Reference proteome</keyword>
<dbReference type="EC" id="3.1.21.10" evidence="1"/>
<dbReference type="EMBL" id="CP000930">
    <property type="protein sequence ID" value="ABZ84385.1"/>
    <property type="molecule type" value="Genomic_DNA"/>
</dbReference>
<dbReference type="RefSeq" id="WP_012282889.1">
    <property type="nucleotide sequence ID" value="NC_010337.2"/>
</dbReference>
<dbReference type="SMR" id="B0TF68"/>
<dbReference type="STRING" id="498761.HM1_1827"/>
<dbReference type="KEGG" id="hmo:HM1_1827"/>
<dbReference type="eggNOG" id="COG0817">
    <property type="taxonomic scope" value="Bacteria"/>
</dbReference>
<dbReference type="HOGENOM" id="CLU_091257_3_1_9"/>
<dbReference type="OrthoDB" id="9805499at2"/>
<dbReference type="Proteomes" id="UP000008550">
    <property type="component" value="Chromosome"/>
</dbReference>
<dbReference type="GO" id="GO:0005737">
    <property type="term" value="C:cytoplasm"/>
    <property type="evidence" value="ECO:0007669"/>
    <property type="project" value="UniProtKB-SubCell"/>
</dbReference>
<dbReference type="GO" id="GO:0048476">
    <property type="term" value="C:Holliday junction resolvase complex"/>
    <property type="evidence" value="ECO:0007669"/>
    <property type="project" value="UniProtKB-UniRule"/>
</dbReference>
<dbReference type="GO" id="GO:0008821">
    <property type="term" value="F:crossover junction DNA endonuclease activity"/>
    <property type="evidence" value="ECO:0007669"/>
    <property type="project" value="UniProtKB-UniRule"/>
</dbReference>
<dbReference type="GO" id="GO:0003677">
    <property type="term" value="F:DNA binding"/>
    <property type="evidence" value="ECO:0007669"/>
    <property type="project" value="UniProtKB-KW"/>
</dbReference>
<dbReference type="GO" id="GO:0000287">
    <property type="term" value="F:magnesium ion binding"/>
    <property type="evidence" value="ECO:0007669"/>
    <property type="project" value="UniProtKB-UniRule"/>
</dbReference>
<dbReference type="GO" id="GO:0006310">
    <property type="term" value="P:DNA recombination"/>
    <property type="evidence" value="ECO:0007669"/>
    <property type="project" value="UniProtKB-UniRule"/>
</dbReference>
<dbReference type="GO" id="GO:0006281">
    <property type="term" value="P:DNA repair"/>
    <property type="evidence" value="ECO:0007669"/>
    <property type="project" value="UniProtKB-UniRule"/>
</dbReference>
<dbReference type="CDD" id="cd16962">
    <property type="entry name" value="RuvC"/>
    <property type="match status" value="1"/>
</dbReference>
<dbReference type="FunFam" id="3.30.420.10:FF:000002">
    <property type="entry name" value="Crossover junction endodeoxyribonuclease RuvC"/>
    <property type="match status" value="1"/>
</dbReference>
<dbReference type="Gene3D" id="3.30.420.10">
    <property type="entry name" value="Ribonuclease H-like superfamily/Ribonuclease H"/>
    <property type="match status" value="1"/>
</dbReference>
<dbReference type="HAMAP" id="MF_00034">
    <property type="entry name" value="RuvC"/>
    <property type="match status" value="1"/>
</dbReference>
<dbReference type="InterPro" id="IPR012337">
    <property type="entry name" value="RNaseH-like_sf"/>
</dbReference>
<dbReference type="InterPro" id="IPR036397">
    <property type="entry name" value="RNaseH_sf"/>
</dbReference>
<dbReference type="InterPro" id="IPR020563">
    <property type="entry name" value="X-over_junc_endoDNase_Mg_BS"/>
</dbReference>
<dbReference type="InterPro" id="IPR002176">
    <property type="entry name" value="X-over_junc_endoDNase_RuvC"/>
</dbReference>
<dbReference type="NCBIfam" id="NF000711">
    <property type="entry name" value="PRK00039.2-1"/>
    <property type="match status" value="1"/>
</dbReference>
<dbReference type="NCBIfam" id="TIGR00228">
    <property type="entry name" value="ruvC"/>
    <property type="match status" value="1"/>
</dbReference>
<dbReference type="PANTHER" id="PTHR30194">
    <property type="entry name" value="CROSSOVER JUNCTION ENDODEOXYRIBONUCLEASE RUVC"/>
    <property type="match status" value="1"/>
</dbReference>
<dbReference type="PANTHER" id="PTHR30194:SF3">
    <property type="entry name" value="CROSSOVER JUNCTION ENDODEOXYRIBONUCLEASE RUVC"/>
    <property type="match status" value="1"/>
</dbReference>
<dbReference type="Pfam" id="PF02075">
    <property type="entry name" value="RuvC"/>
    <property type="match status" value="1"/>
</dbReference>
<dbReference type="PRINTS" id="PR00696">
    <property type="entry name" value="RSOLVASERUVC"/>
</dbReference>
<dbReference type="SUPFAM" id="SSF53098">
    <property type="entry name" value="Ribonuclease H-like"/>
    <property type="match status" value="1"/>
</dbReference>
<dbReference type="PROSITE" id="PS01321">
    <property type="entry name" value="RUVC"/>
    <property type="match status" value="1"/>
</dbReference>
<protein>
    <recommendedName>
        <fullName evidence="1">Crossover junction endodeoxyribonuclease RuvC</fullName>
        <ecNumber evidence="1">3.1.21.10</ecNumber>
    </recommendedName>
    <alternativeName>
        <fullName evidence="1">Holliday junction nuclease RuvC</fullName>
    </alternativeName>
    <alternativeName>
        <fullName evidence="1">Holliday junction resolvase RuvC</fullName>
    </alternativeName>
</protein>
<accession>B0TF68</accession>
<proteinExistence type="inferred from homology"/>
<comment type="function">
    <text evidence="1">The RuvA-RuvB-RuvC complex processes Holliday junction (HJ) DNA during genetic recombination and DNA repair. Endonuclease that resolves HJ intermediates. Cleaves cruciform DNA by making single-stranded nicks across the HJ at symmetrical positions within the homologous arms, yielding a 5'-phosphate and a 3'-hydroxyl group; requires a central core of homology in the junction. The consensus cleavage sequence is 5'-(A/T)TT(C/G)-3'. Cleavage occurs on the 3'-side of the TT dinucleotide at the point of strand exchange. HJ branch migration catalyzed by RuvA-RuvB allows RuvC to scan DNA until it finds its consensus sequence, where it cleaves and resolves the cruciform DNA.</text>
</comment>
<comment type="catalytic activity">
    <reaction evidence="1">
        <text>Endonucleolytic cleavage at a junction such as a reciprocal single-stranded crossover between two homologous DNA duplexes (Holliday junction).</text>
        <dbReference type="EC" id="3.1.21.10"/>
    </reaction>
</comment>
<comment type="cofactor">
    <cofactor evidence="1">
        <name>Mg(2+)</name>
        <dbReference type="ChEBI" id="CHEBI:18420"/>
    </cofactor>
    <text evidence="1">Binds 2 Mg(2+) ion per subunit.</text>
</comment>
<comment type="subunit">
    <text evidence="1">Homodimer which binds Holliday junction (HJ) DNA. The HJ becomes 2-fold symmetrical on binding to RuvC with unstacked arms; it has a different conformation from HJ DNA in complex with RuvA. In the full resolvosome a probable DNA-RuvA(4)-RuvB(12)-RuvC(2) complex forms which resolves the HJ.</text>
</comment>
<comment type="subcellular location">
    <subcellularLocation>
        <location evidence="1">Cytoplasm</location>
    </subcellularLocation>
</comment>
<comment type="similarity">
    <text evidence="1">Belongs to the RuvC family.</text>
</comment>
<organism>
    <name type="scientific">Heliobacterium modesticaldum (strain ATCC 51547 / Ice1)</name>
    <dbReference type="NCBI Taxonomy" id="498761"/>
    <lineage>
        <taxon>Bacteria</taxon>
        <taxon>Bacillati</taxon>
        <taxon>Bacillota</taxon>
        <taxon>Clostridia</taxon>
        <taxon>Eubacteriales</taxon>
        <taxon>Heliobacteriaceae</taxon>
        <taxon>Heliomicrobium</taxon>
    </lineage>
</organism>
<evidence type="ECO:0000255" key="1">
    <source>
        <dbReference type="HAMAP-Rule" id="MF_00034"/>
    </source>
</evidence>
<feature type="chain" id="PRO_1000090531" description="Crossover junction endodeoxyribonuclease RuvC">
    <location>
        <begin position="1"/>
        <end position="162"/>
    </location>
</feature>
<feature type="active site" evidence="1">
    <location>
        <position position="7"/>
    </location>
</feature>
<feature type="active site" evidence="1">
    <location>
        <position position="67"/>
    </location>
</feature>
<feature type="active site" evidence="1">
    <location>
        <position position="140"/>
    </location>
</feature>
<feature type="binding site" evidence="1">
    <location>
        <position position="7"/>
    </location>
    <ligand>
        <name>Mg(2+)</name>
        <dbReference type="ChEBI" id="CHEBI:18420"/>
        <label>1</label>
    </ligand>
</feature>
<feature type="binding site" evidence="1">
    <location>
        <position position="67"/>
    </location>
    <ligand>
        <name>Mg(2+)</name>
        <dbReference type="ChEBI" id="CHEBI:18420"/>
        <label>2</label>
    </ligand>
</feature>
<feature type="binding site" evidence="1">
    <location>
        <position position="140"/>
    </location>
    <ligand>
        <name>Mg(2+)</name>
        <dbReference type="ChEBI" id="CHEBI:18420"/>
        <label>1</label>
    </ligand>
</feature>
<name>RUVC_HELMI</name>
<reference key="1">
    <citation type="journal article" date="2008" name="J. Bacteriol.">
        <title>The genome of Heliobacterium modesticaldum, a phototrophic representative of the Firmicutes containing the simplest photosynthetic apparatus.</title>
        <authorList>
            <person name="Sattley W.M."/>
            <person name="Madigan M.T."/>
            <person name="Swingley W.D."/>
            <person name="Cheung P.C."/>
            <person name="Clocksin K.M."/>
            <person name="Conrad A.L."/>
            <person name="Dejesa L.C."/>
            <person name="Honchak B.M."/>
            <person name="Jung D.O."/>
            <person name="Karbach L.E."/>
            <person name="Kurdoglu A."/>
            <person name="Lahiri S."/>
            <person name="Mastrian S.D."/>
            <person name="Page L.E."/>
            <person name="Taylor H.L."/>
            <person name="Wang Z.T."/>
            <person name="Raymond J."/>
            <person name="Chen M."/>
            <person name="Blankenship R.E."/>
            <person name="Touchman J.W."/>
        </authorList>
    </citation>
    <scope>NUCLEOTIDE SEQUENCE [LARGE SCALE GENOMIC DNA]</scope>
    <source>
        <strain>ATCC 51547 / Ice1</strain>
    </source>
</reference>
<sequence>MVILGIDPGTAICGYGLIEVQGNRLSALAYGAVRTPAHTSQASRLQTIFTDLEAIIATYRPTHVAVEELFFNRNVTTALTVGQARGVILLAAARAGLSVHEYKPSQVKQAVVGYGRAEKQQVQQMVRVLLALEEIPKPDDVADALAVAICCAHSLTWGVACR</sequence>
<gene>
    <name evidence="1" type="primary">ruvC</name>
    <name type="ordered locus">Helmi_17600</name>
    <name type="ORF">HM1_1827</name>
</gene>